<gene>
    <name evidence="1" type="primary">murE</name>
    <name type="ordered locus">XOO3830</name>
</gene>
<feature type="chain" id="PRO_1000012404" description="UDP-N-acetylmuramoyl-L-alanyl-D-glutamate--2,6-diaminopimelate ligase">
    <location>
        <begin position="1"/>
        <end position="495"/>
    </location>
</feature>
<feature type="short sequence motif" description="Meso-diaminopimelate recognition motif">
    <location>
        <begin position="408"/>
        <end position="411"/>
    </location>
</feature>
<feature type="binding site" evidence="1">
    <location>
        <position position="29"/>
    </location>
    <ligand>
        <name>UDP-N-acetyl-alpha-D-muramoyl-L-alanyl-D-glutamate</name>
        <dbReference type="ChEBI" id="CHEBI:83900"/>
    </ligand>
</feature>
<feature type="binding site" evidence="1">
    <location>
        <begin position="111"/>
        <end position="117"/>
    </location>
    <ligand>
        <name>ATP</name>
        <dbReference type="ChEBI" id="CHEBI:30616"/>
    </ligand>
</feature>
<feature type="binding site" evidence="1">
    <location>
        <begin position="153"/>
        <end position="154"/>
    </location>
    <ligand>
        <name>UDP-N-acetyl-alpha-D-muramoyl-L-alanyl-D-glutamate</name>
        <dbReference type="ChEBI" id="CHEBI:83900"/>
    </ligand>
</feature>
<feature type="binding site" evidence="1">
    <location>
        <position position="180"/>
    </location>
    <ligand>
        <name>UDP-N-acetyl-alpha-D-muramoyl-L-alanyl-D-glutamate</name>
        <dbReference type="ChEBI" id="CHEBI:83900"/>
    </ligand>
</feature>
<feature type="binding site" evidence="1">
    <location>
        <position position="186"/>
    </location>
    <ligand>
        <name>UDP-N-acetyl-alpha-D-muramoyl-L-alanyl-D-glutamate</name>
        <dbReference type="ChEBI" id="CHEBI:83900"/>
    </ligand>
</feature>
<feature type="binding site" evidence="1">
    <location>
        <position position="188"/>
    </location>
    <ligand>
        <name>UDP-N-acetyl-alpha-D-muramoyl-L-alanyl-D-glutamate</name>
        <dbReference type="ChEBI" id="CHEBI:83900"/>
    </ligand>
</feature>
<feature type="binding site" evidence="1">
    <location>
        <position position="384"/>
    </location>
    <ligand>
        <name>meso-2,6-diaminopimelate</name>
        <dbReference type="ChEBI" id="CHEBI:57791"/>
    </ligand>
</feature>
<feature type="binding site" evidence="1">
    <location>
        <begin position="408"/>
        <end position="411"/>
    </location>
    <ligand>
        <name>meso-2,6-diaminopimelate</name>
        <dbReference type="ChEBI" id="CHEBI:57791"/>
    </ligand>
</feature>
<feature type="binding site" evidence="1">
    <location>
        <position position="459"/>
    </location>
    <ligand>
        <name>meso-2,6-diaminopimelate</name>
        <dbReference type="ChEBI" id="CHEBI:57791"/>
    </ligand>
</feature>
<feature type="binding site" evidence="1">
    <location>
        <position position="463"/>
    </location>
    <ligand>
        <name>meso-2,6-diaminopimelate</name>
        <dbReference type="ChEBI" id="CHEBI:57791"/>
    </ligand>
</feature>
<feature type="modified residue" description="N6-carboxylysine" evidence="1">
    <location>
        <position position="220"/>
    </location>
</feature>
<evidence type="ECO:0000255" key="1">
    <source>
        <dbReference type="HAMAP-Rule" id="MF_00208"/>
    </source>
</evidence>
<comment type="function">
    <text evidence="1">Catalyzes the addition of meso-diaminopimelic acid to the nucleotide precursor UDP-N-acetylmuramoyl-L-alanyl-D-glutamate (UMAG) in the biosynthesis of bacterial cell-wall peptidoglycan.</text>
</comment>
<comment type="catalytic activity">
    <reaction evidence="1">
        <text>UDP-N-acetyl-alpha-D-muramoyl-L-alanyl-D-glutamate + meso-2,6-diaminopimelate + ATP = UDP-N-acetyl-alpha-D-muramoyl-L-alanyl-gamma-D-glutamyl-meso-2,6-diaminopimelate + ADP + phosphate + H(+)</text>
        <dbReference type="Rhea" id="RHEA:23676"/>
        <dbReference type="ChEBI" id="CHEBI:15378"/>
        <dbReference type="ChEBI" id="CHEBI:30616"/>
        <dbReference type="ChEBI" id="CHEBI:43474"/>
        <dbReference type="ChEBI" id="CHEBI:57791"/>
        <dbReference type="ChEBI" id="CHEBI:83900"/>
        <dbReference type="ChEBI" id="CHEBI:83905"/>
        <dbReference type="ChEBI" id="CHEBI:456216"/>
        <dbReference type="EC" id="6.3.2.13"/>
    </reaction>
</comment>
<comment type="cofactor">
    <cofactor evidence="1">
        <name>Mg(2+)</name>
        <dbReference type="ChEBI" id="CHEBI:18420"/>
    </cofactor>
</comment>
<comment type="pathway">
    <text evidence="1">Cell wall biogenesis; peptidoglycan biosynthesis.</text>
</comment>
<comment type="subcellular location">
    <subcellularLocation>
        <location evidence="1">Cytoplasm</location>
    </subcellularLocation>
</comment>
<comment type="PTM">
    <text evidence="1">Carboxylation is probably crucial for Mg(2+) binding and, consequently, for the gamma-phosphate positioning of ATP.</text>
</comment>
<comment type="similarity">
    <text evidence="1">Belongs to the MurCDEF family. MurE subfamily.</text>
</comment>
<protein>
    <recommendedName>
        <fullName evidence="1">UDP-N-acetylmuramoyl-L-alanyl-D-glutamate--2,6-diaminopimelate ligase</fullName>
        <ecNumber evidence="1">6.3.2.13</ecNumber>
    </recommendedName>
    <alternativeName>
        <fullName evidence="1">Meso-A2pm-adding enzyme</fullName>
    </alternativeName>
    <alternativeName>
        <fullName evidence="1">Meso-diaminopimelate-adding enzyme</fullName>
    </alternativeName>
    <alternativeName>
        <fullName evidence="1">UDP-MurNAc-L-Ala-D-Glu:meso-diaminopimelate ligase</fullName>
    </alternativeName>
    <alternativeName>
        <fullName evidence="1">UDP-MurNAc-tripeptide synthetase</fullName>
    </alternativeName>
    <alternativeName>
        <fullName evidence="1">UDP-N-acetylmuramyl-tripeptide synthetase</fullName>
    </alternativeName>
</protein>
<name>MURE_XANOR</name>
<keyword id="KW-0067">ATP-binding</keyword>
<keyword id="KW-0131">Cell cycle</keyword>
<keyword id="KW-0132">Cell division</keyword>
<keyword id="KW-0133">Cell shape</keyword>
<keyword id="KW-0961">Cell wall biogenesis/degradation</keyword>
<keyword id="KW-0963">Cytoplasm</keyword>
<keyword id="KW-0436">Ligase</keyword>
<keyword id="KW-0460">Magnesium</keyword>
<keyword id="KW-0547">Nucleotide-binding</keyword>
<keyword id="KW-0573">Peptidoglycan synthesis</keyword>
<keyword id="KW-1185">Reference proteome</keyword>
<reference key="1">
    <citation type="journal article" date="2005" name="Nucleic Acids Res.">
        <title>The genome sequence of Xanthomonas oryzae pathovar oryzae KACC10331, the bacterial blight pathogen of rice.</title>
        <authorList>
            <person name="Lee B.-M."/>
            <person name="Park Y.-J."/>
            <person name="Park D.-S."/>
            <person name="Kang H.-W."/>
            <person name="Kim J.-G."/>
            <person name="Song E.-S."/>
            <person name="Park I.-C."/>
            <person name="Yoon U.-H."/>
            <person name="Hahn J.-H."/>
            <person name="Koo B.-S."/>
            <person name="Lee G.-B."/>
            <person name="Kim H."/>
            <person name="Park H.-S."/>
            <person name="Yoon K.-O."/>
            <person name="Kim J.-H."/>
            <person name="Jung C.-H."/>
            <person name="Koh N.-H."/>
            <person name="Seo J.-S."/>
            <person name="Go S.-J."/>
        </authorList>
    </citation>
    <scope>NUCLEOTIDE SEQUENCE [LARGE SCALE GENOMIC DNA]</scope>
    <source>
        <strain>KACC10331 / KXO85</strain>
    </source>
</reference>
<proteinExistence type="inferred from homology"/>
<organism>
    <name type="scientific">Xanthomonas oryzae pv. oryzae (strain KACC10331 / KXO85)</name>
    <dbReference type="NCBI Taxonomy" id="291331"/>
    <lineage>
        <taxon>Bacteria</taxon>
        <taxon>Pseudomonadati</taxon>
        <taxon>Pseudomonadota</taxon>
        <taxon>Gammaproteobacteria</taxon>
        <taxon>Lysobacterales</taxon>
        <taxon>Lysobacteraceae</taxon>
        <taxon>Xanthomonas</taxon>
    </lineage>
</organism>
<accession>Q5GW37</accession>
<dbReference type="EC" id="6.3.2.13" evidence="1"/>
<dbReference type="EMBL" id="AE013598">
    <property type="protein sequence ID" value="AAW77084.1"/>
    <property type="molecule type" value="Genomic_DNA"/>
</dbReference>
<dbReference type="SMR" id="Q5GW37"/>
<dbReference type="STRING" id="291331.XOO3830"/>
<dbReference type="KEGG" id="xoo:XOO3830"/>
<dbReference type="HOGENOM" id="CLU_022291_3_2_6"/>
<dbReference type="UniPathway" id="UPA00219"/>
<dbReference type="Proteomes" id="UP000006735">
    <property type="component" value="Chromosome"/>
</dbReference>
<dbReference type="GO" id="GO:0005737">
    <property type="term" value="C:cytoplasm"/>
    <property type="evidence" value="ECO:0007669"/>
    <property type="project" value="UniProtKB-SubCell"/>
</dbReference>
<dbReference type="GO" id="GO:0005524">
    <property type="term" value="F:ATP binding"/>
    <property type="evidence" value="ECO:0007669"/>
    <property type="project" value="UniProtKB-UniRule"/>
</dbReference>
<dbReference type="GO" id="GO:0000287">
    <property type="term" value="F:magnesium ion binding"/>
    <property type="evidence" value="ECO:0007669"/>
    <property type="project" value="UniProtKB-UniRule"/>
</dbReference>
<dbReference type="GO" id="GO:0008765">
    <property type="term" value="F:UDP-N-acetylmuramoylalanyl-D-glutamate-2,6-diaminopimelate ligase activity"/>
    <property type="evidence" value="ECO:0007669"/>
    <property type="project" value="UniProtKB-UniRule"/>
</dbReference>
<dbReference type="GO" id="GO:0051301">
    <property type="term" value="P:cell division"/>
    <property type="evidence" value="ECO:0007669"/>
    <property type="project" value="UniProtKB-KW"/>
</dbReference>
<dbReference type="GO" id="GO:0071555">
    <property type="term" value="P:cell wall organization"/>
    <property type="evidence" value="ECO:0007669"/>
    <property type="project" value="UniProtKB-KW"/>
</dbReference>
<dbReference type="GO" id="GO:0009252">
    <property type="term" value="P:peptidoglycan biosynthetic process"/>
    <property type="evidence" value="ECO:0007669"/>
    <property type="project" value="UniProtKB-UniRule"/>
</dbReference>
<dbReference type="GO" id="GO:0008360">
    <property type="term" value="P:regulation of cell shape"/>
    <property type="evidence" value="ECO:0007669"/>
    <property type="project" value="UniProtKB-KW"/>
</dbReference>
<dbReference type="Gene3D" id="3.90.190.20">
    <property type="entry name" value="Mur ligase, C-terminal domain"/>
    <property type="match status" value="1"/>
</dbReference>
<dbReference type="Gene3D" id="3.40.1190.10">
    <property type="entry name" value="Mur-like, catalytic domain"/>
    <property type="match status" value="1"/>
</dbReference>
<dbReference type="Gene3D" id="3.40.1390.10">
    <property type="entry name" value="MurE/MurF, N-terminal domain"/>
    <property type="match status" value="1"/>
</dbReference>
<dbReference type="HAMAP" id="MF_00208">
    <property type="entry name" value="MurE"/>
    <property type="match status" value="1"/>
</dbReference>
<dbReference type="InterPro" id="IPR036565">
    <property type="entry name" value="Mur-like_cat_sf"/>
</dbReference>
<dbReference type="InterPro" id="IPR004101">
    <property type="entry name" value="Mur_ligase_C"/>
</dbReference>
<dbReference type="InterPro" id="IPR036615">
    <property type="entry name" value="Mur_ligase_C_dom_sf"/>
</dbReference>
<dbReference type="InterPro" id="IPR013221">
    <property type="entry name" value="Mur_ligase_cen"/>
</dbReference>
<dbReference type="InterPro" id="IPR000713">
    <property type="entry name" value="Mur_ligase_N"/>
</dbReference>
<dbReference type="InterPro" id="IPR035911">
    <property type="entry name" value="MurE/MurF_N"/>
</dbReference>
<dbReference type="InterPro" id="IPR005761">
    <property type="entry name" value="UDP-N-AcMur-Glu-dNH2Pim_ligase"/>
</dbReference>
<dbReference type="NCBIfam" id="TIGR01085">
    <property type="entry name" value="murE"/>
    <property type="match status" value="1"/>
</dbReference>
<dbReference type="NCBIfam" id="NF001124">
    <property type="entry name" value="PRK00139.1-2"/>
    <property type="match status" value="1"/>
</dbReference>
<dbReference type="NCBIfam" id="NF001126">
    <property type="entry name" value="PRK00139.1-4"/>
    <property type="match status" value="1"/>
</dbReference>
<dbReference type="PANTHER" id="PTHR23135">
    <property type="entry name" value="MUR LIGASE FAMILY MEMBER"/>
    <property type="match status" value="1"/>
</dbReference>
<dbReference type="PANTHER" id="PTHR23135:SF4">
    <property type="entry name" value="UDP-N-ACETYLMURAMOYL-L-ALANYL-D-GLUTAMATE--2,6-DIAMINOPIMELATE LIGASE MURE HOMOLOG, CHLOROPLASTIC"/>
    <property type="match status" value="1"/>
</dbReference>
<dbReference type="Pfam" id="PF01225">
    <property type="entry name" value="Mur_ligase"/>
    <property type="match status" value="1"/>
</dbReference>
<dbReference type="Pfam" id="PF02875">
    <property type="entry name" value="Mur_ligase_C"/>
    <property type="match status" value="1"/>
</dbReference>
<dbReference type="Pfam" id="PF08245">
    <property type="entry name" value="Mur_ligase_M"/>
    <property type="match status" value="1"/>
</dbReference>
<dbReference type="SUPFAM" id="SSF53623">
    <property type="entry name" value="MurD-like peptide ligases, catalytic domain"/>
    <property type="match status" value="1"/>
</dbReference>
<dbReference type="SUPFAM" id="SSF53244">
    <property type="entry name" value="MurD-like peptide ligases, peptide-binding domain"/>
    <property type="match status" value="1"/>
</dbReference>
<dbReference type="SUPFAM" id="SSF63418">
    <property type="entry name" value="MurE/MurF N-terminal domain"/>
    <property type="match status" value="1"/>
</dbReference>
<sequence length="495" mass="51494">MSRSMALSQLLPDVALPHDVQVSGLVMDSRTVAPGDAFVAIAGFGAHGLGFVEQARANGATAVLFEPPAPDGLPVPVDAIAVPGLRARLGVMADQFHGRPSHAMRMVGVTGTNGKTSTVQLLAQALTLLGTPTGTLGTLGVGLYGAAVSTGFTTPLVLPTHALLAQLRDEGAQAVAMEVSSHALDQGRVDAVHFDVAVFTNLTRDHLDYHGEMAQYGAAKAKLFTRPGLKAAVVNLDDGFGRTLFASRDPVLRAIGVSSRAHADASVSAQALQLDHNGINFALNIQGEVHPVHSPLLGRFNVDNLLAVAGALWALDIAPAQIATVLGQLQPIHGRMNRLGGAHGAPLVVVDYAHTPDALEQALSSLRSHAQDRLICVFGCGGERDTGKRPQMAAIAELNADVAIVTDDNPRGEDGDAIVADILRGFARPDAAIVQRDRAAAIHQAIAMASASDIVLIAGKGHEPYQEVAGVRHAFDDAIVAAQALLPRTVLGVRP</sequence>